<keyword id="KW-0134">Cell wall</keyword>
<keyword id="KW-0903">Direct protein sequencing</keyword>
<keyword id="KW-1015">Disulfide bond</keyword>
<keyword id="KW-0325">Glycoprotein</keyword>
<keyword id="KW-0433">Leucine-rich repeat</keyword>
<keyword id="KW-0472">Membrane</keyword>
<keyword id="KW-0611">Plant defense</keyword>
<keyword id="KW-0677">Repeat</keyword>
<keyword id="KW-0964">Secreted</keyword>
<keyword id="KW-0732">Signal</keyword>
<organism>
    <name type="scientific">Vitis vinifera</name>
    <name type="common">Grape</name>
    <dbReference type="NCBI Taxonomy" id="29760"/>
    <lineage>
        <taxon>Eukaryota</taxon>
        <taxon>Viridiplantae</taxon>
        <taxon>Streptophyta</taxon>
        <taxon>Embryophyta</taxon>
        <taxon>Tracheophyta</taxon>
        <taxon>Spermatophyta</taxon>
        <taxon>Magnoliopsida</taxon>
        <taxon>eudicotyledons</taxon>
        <taxon>Gunneridae</taxon>
        <taxon>Pentapetalae</taxon>
        <taxon>rosids</taxon>
        <taxon>Vitales</taxon>
        <taxon>Vitaceae</taxon>
        <taxon>Viteae</taxon>
        <taxon>Vitis</taxon>
    </lineage>
</organism>
<comment type="function">
    <text evidence="7">Inhibitor of fungal polygalacturonase. It is an important factor for plant resistance to phytopathogenic fungi.</text>
</comment>
<comment type="subcellular location">
    <subcellularLocation>
        <location evidence="1">Secreted</location>
        <location evidence="1">Cell wall</location>
    </subcellularLocation>
    <subcellularLocation>
        <location evidence="1">Membrane</location>
        <topology evidence="1">Peripheral membrane protein</topology>
    </subcellularLocation>
</comment>
<comment type="similarity">
    <text evidence="2">Belongs to the polygalacturonase-inhibiting protein family.</text>
</comment>
<accession>A7PW81</accession>
<accession>Q8LKV2</accession>
<accession>Q9AXP4</accession>
<dbReference type="EMBL" id="AF305093">
    <property type="protein sequence ID" value="AAK14075.1"/>
    <property type="molecule type" value="mRNA"/>
</dbReference>
<dbReference type="EMBL" id="AF499451">
    <property type="protein sequence ID" value="AAM74142.1"/>
    <property type="molecule type" value="Genomic_DNA"/>
</dbReference>
<dbReference type="RefSeq" id="NP_001268106.1">
    <property type="nucleotide sequence ID" value="NM_001281177.1"/>
</dbReference>
<dbReference type="SMR" id="A7PW81"/>
<dbReference type="GlyCosmos" id="A7PW81">
    <property type="glycosylation" value="6 sites, No reported glycans"/>
</dbReference>
<dbReference type="PaxDb" id="29760-VIT_08s0007g07690.t01"/>
<dbReference type="EnsemblPlants" id="Vitvi08g01844_t001">
    <property type="protein sequence ID" value="Vitvi08g01844_P001"/>
    <property type="gene ID" value="Vitvi08g01844"/>
</dbReference>
<dbReference type="GeneID" id="100232865"/>
<dbReference type="Gramene" id="Vitvi08g01844_t001">
    <property type="protein sequence ID" value="Vitvi08g01844_P001"/>
    <property type="gene ID" value="Vitvi08g01844"/>
</dbReference>
<dbReference type="KEGG" id="vvi:100232865"/>
<dbReference type="eggNOG" id="ENOG502QRQP">
    <property type="taxonomic scope" value="Eukaryota"/>
</dbReference>
<dbReference type="OrthoDB" id="676979at2759"/>
<dbReference type="ExpressionAtlas" id="A7PW81">
    <property type="expression patterns" value="baseline and differential"/>
</dbReference>
<dbReference type="GO" id="GO:0005576">
    <property type="term" value="C:extracellular region"/>
    <property type="evidence" value="ECO:0007669"/>
    <property type="project" value="UniProtKB-KW"/>
</dbReference>
<dbReference type="GO" id="GO:0016020">
    <property type="term" value="C:membrane"/>
    <property type="evidence" value="ECO:0007669"/>
    <property type="project" value="UniProtKB-SubCell"/>
</dbReference>
<dbReference type="GO" id="GO:0006952">
    <property type="term" value="P:defense response"/>
    <property type="evidence" value="ECO:0007669"/>
    <property type="project" value="UniProtKB-KW"/>
</dbReference>
<dbReference type="FunFam" id="3.80.10.10:FF:000348">
    <property type="entry name" value="Polygalacturonase inhibitor 1"/>
    <property type="match status" value="1"/>
</dbReference>
<dbReference type="Gene3D" id="3.80.10.10">
    <property type="entry name" value="Ribonuclease Inhibitor"/>
    <property type="match status" value="1"/>
</dbReference>
<dbReference type="InterPro" id="IPR001611">
    <property type="entry name" value="Leu-rich_rpt"/>
</dbReference>
<dbReference type="InterPro" id="IPR032675">
    <property type="entry name" value="LRR_dom_sf"/>
</dbReference>
<dbReference type="InterPro" id="IPR013210">
    <property type="entry name" value="LRR_N_plant-typ"/>
</dbReference>
<dbReference type="InterPro" id="IPR051848">
    <property type="entry name" value="PGIP"/>
</dbReference>
<dbReference type="PANTHER" id="PTHR48059">
    <property type="entry name" value="POLYGALACTURONASE INHIBITOR 1"/>
    <property type="match status" value="1"/>
</dbReference>
<dbReference type="PANTHER" id="PTHR48059:SF4">
    <property type="entry name" value="POLYGALACTURONASE INHIBITOR 1-RELATED"/>
    <property type="match status" value="1"/>
</dbReference>
<dbReference type="Pfam" id="PF00560">
    <property type="entry name" value="LRR_1"/>
    <property type="match status" value="3"/>
</dbReference>
<dbReference type="Pfam" id="PF13855">
    <property type="entry name" value="LRR_8"/>
    <property type="match status" value="1"/>
</dbReference>
<dbReference type="Pfam" id="PF08263">
    <property type="entry name" value="LRRNT_2"/>
    <property type="match status" value="1"/>
</dbReference>
<dbReference type="PRINTS" id="PR00019">
    <property type="entry name" value="LEURICHRPT"/>
</dbReference>
<dbReference type="SUPFAM" id="SSF52058">
    <property type="entry name" value="L domain-like"/>
    <property type="match status" value="1"/>
</dbReference>
<dbReference type="PROSITE" id="PS51450">
    <property type="entry name" value="LRR"/>
    <property type="match status" value="4"/>
</dbReference>
<name>PGIP_VITVI</name>
<reference evidence="7 8" key="1">
    <citation type="submission" date="2000-09" db="EMBL/GenBank/DDBJ databases">
        <title>Molecular cloning of a grapevine gene coding for polygalacturonase inhibiting protein.</title>
        <authorList>
            <person name="Bezier A."/>
            <person name="Lambert B."/>
            <person name="Baillieul F."/>
        </authorList>
    </citation>
    <scope>NUCLEOTIDE SEQUENCE [MRNA]</scope>
    <source>
        <strain evidence="5">cv. Chardonnay</strain>
        <tissue evidence="8">Leaf</tissue>
    </source>
</reference>
<reference evidence="7 8" key="2">
    <citation type="submission" date="2002-04" db="EMBL/GenBank/DDBJ databases">
        <title>The isolation and characterization of a gene encoding a polygalacturonase-inhibiting protein (PGIP) from Vitis vinifera L.</title>
        <authorList>
            <person name="De Ascensao A.R."/>
            <person name="Pretorius I.S."/>
            <person name="Bellstedt D.U."/>
            <person name="Burger J.T."/>
            <person name="Vivier M.A."/>
        </authorList>
    </citation>
    <scope>NUCLEOTIDE SEQUENCE [GENOMIC DNA]</scope>
    <source>
        <strain evidence="6">cv. Pinotage</strain>
    </source>
</reference>
<reference key="3">
    <citation type="journal article" date="2007" name="Nature">
        <title>The grapevine genome sequence suggests ancestral hexaploidization in major angiosperm phyla.</title>
        <authorList>
            <person name="Jaillon O."/>
            <person name="Aury J.-M."/>
            <person name="Noel B."/>
            <person name="Policriti A."/>
            <person name="Clepet C."/>
            <person name="Casagrande A."/>
            <person name="Choisne N."/>
            <person name="Aubourg S."/>
            <person name="Vitulo N."/>
            <person name="Jubin C."/>
            <person name="Vezzi A."/>
            <person name="Legeai F."/>
            <person name="Hugueney P."/>
            <person name="Dasilva C."/>
            <person name="Horner D."/>
            <person name="Mica E."/>
            <person name="Jublot D."/>
            <person name="Poulain J."/>
            <person name="Bruyere C."/>
            <person name="Billault A."/>
            <person name="Segurens B."/>
            <person name="Gouyvenoux M."/>
            <person name="Ugarte E."/>
            <person name="Cattonaro F."/>
            <person name="Anthouard V."/>
            <person name="Vico V."/>
            <person name="Del Fabbro C."/>
            <person name="Alaux M."/>
            <person name="Di Gaspero G."/>
            <person name="Dumas V."/>
            <person name="Felice N."/>
            <person name="Paillard S."/>
            <person name="Juman I."/>
            <person name="Moroldo M."/>
            <person name="Scalabrin S."/>
            <person name="Canaguier A."/>
            <person name="Le Clainche I."/>
            <person name="Malacrida G."/>
            <person name="Durand E."/>
            <person name="Pesole G."/>
            <person name="Laucou V."/>
            <person name="Chatelet P."/>
            <person name="Merdinoglu D."/>
            <person name="Delledonne M."/>
            <person name="Pezzotti M."/>
            <person name="Lecharny A."/>
            <person name="Scarpelli C."/>
            <person name="Artiguenave F."/>
            <person name="Pe M.E."/>
            <person name="Valle G."/>
            <person name="Morgante M."/>
            <person name="Caboche M."/>
            <person name="Adam-Blondon A.-F."/>
            <person name="Weissenbach J."/>
            <person name="Quetier F."/>
            <person name="Wincker P."/>
        </authorList>
    </citation>
    <scope>NUCLEOTIDE SEQUENCE [LARGE SCALE GENOMIC DNA]</scope>
    <source>
        <strain evidence="4">cv. Pinot noir / PN40024</strain>
    </source>
</reference>
<reference evidence="7 8" key="4">
    <citation type="submission" date="2008-07" db="UniProtKB">
        <authorList>
            <person name="Almagro L."/>
            <person name="Belchi-Navarro S."/>
            <person name="Pedreno M.A."/>
        </authorList>
    </citation>
    <scope>PROTEIN SEQUENCE OF 172-179</scope>
</reference>
<sequence>METSKLFLLSSSLLLVLLATRPCPSLSERCNPKDKKVLLQIKKALDNPYILASWNPNTDCCGWYCVECDLTTHRINSLTIFSGQLSGQIPDAVGDLPFLETLIFRKLSNLTGQIPPAIAKLKHLKMVRLSWTNLSGPVPAFFSELKNLTYLDLSFNNLSGPIPGSLSLLPNLGALHLDRNHLTGPIPDSFGKFAGSTPGLHLSHNQLSGKIPYSFRGFDPNVMDLSRNKLEGDLSIFFNANKSTQIVDFSRNLFQFDLSRVEFPKSLTSLDLSHNKIAGSLPEMMTSLDLQFLNVSYNRLCGKIPVGGKLQSFDYDSYFHNRCLCGAPLQSCK</sequence>
<evidence type="ECO:0000250" key="1">
    <source>
        <dbReference type="UniProtKB" id="P58822"/>
    </source>
</evidence>
<evidence type="ECO:0000255" key="2"/>
<evidence type="ECO:0000255" key="3">
    <source>
        <dbReference type="PROSITE-ProRule" id="PRU00498"/>
    </source>
</evidence>
<evidence type="ECO:0000269" key="4">
    <source>
    </source>
</evidence>
<evidence type="ECO:0000269" key="5">
    <source ref="1"/>
</evidence>
<evidence type="ECO:0000269" key="6">
    <source ref="2"/>
</evidence>
<evidence type="ECO:0000305" key="7"/>
<evidence type="ECO:0000312" key="8">
    <source>
        <dbReference type="EMBL" id="AAK14075.1"/>
    </source>
</evidence>
<evidence type="ECO:0000312" key="9">
    <source>
        <dbReference type="EMBL" id="AAM74142.1"/>
    </source>
</evidence>
<proteinExistence type="evidence at protein level"/>
<gene>
    <name type="primary">pgip</name>
    <name type="ORF">GSVIVT00025506001</name>
    <name type="ORF">LOC100232865</name>
</gene>
<feature type="signal peptide" evidence="2">
    <location>
        <begin position="1"/>
        <end position="27"/>
    </location>
</feature>
<feature type="chain" id="PRO_0000363745" description="Polygalacturonase inhibitor" evidence="2">
    <location>
        <begin position="28"/>
        <end position="333"/>
    </location>
</feature>
<feature type="repeat" description="LRR 1" evidence="2">
    <location>
        <begin position="72"/>
        <end position="96"/>
    </location>
</feature>
<feature type="repeat" description="LRR 2" evidence="2">
    <location>
        <begin position="97"/>
        <end position="120"/>
    </location>
</feature>
<feature type="repeat" description="LRR 3" evidence="2">
    <location>
        <begin position="121"/>
        <end position="144"/>
    </location>
</feature>
<feature type="repeat" description="LRR 4" evidence="2">
    <location>
        <begin position="145"/>
        <end position="169"/>
    </location>
</feature>
<feature type="repeat" description="LRR 5" evidence="2">
    <location>
        <begin position="170"/>
        <end position="192"/>
    </location>
</feature>
<feature type="repeat" description="LRR 6" evidence="2">
    <location>
        <begin position="194"/>
        <end position="220"/>
    </location>
</feature>
<feature type="repeat" description="LRR 7" evidence="2">
    <location>
        <begin position="221"/>
        <end position="240"/>
    </location>
</feature>
<feature type="repeat" description="LRR 8" evidence="2">
    <location>
        <begin position="241"/>
        <end position="263"/>
    </location>
</feature>
<feature type="repeat" description="LRR 9" evidence="2">
    <location>
        <begin position="264"/>
        <end position="288"/>
    </location>
</feature>
<feature type="repeat" description="LRR 10" evidence="2">
    <location>
        <begin position="290"/>
        <end position="312"/>
    </location>
</feature>
<feature type="glycosylation site" description="N-linked (GlcNAc...) asparagine" evidence="3">
    <location>
        <position position="109"/>
    </location>
</feature>
<feature type="glycosylation site" description="N-linked (GlcNAc...) asparagine" evidence="3">
    <location>
        <position position="133"/>
    </location>
</feature>
<feature type="glycosylation site" description="N-linked (GlcNAc...) asparagine" evidence="3">
    <location>
        <position position="147"/>
    </location>
</feature>
<feature type="glycosylation site" description="N-linked (GlcNAc...) asparagine" evidence="3">
    <location>
        <position position="157"/>
    </location>
</feature>
<feature type="glycosylation site" description="N-linked (GlcNAc...) asparagine" evidence="3">
    <location>
        <position position="241"/>
    </location>
</feature>
<feature type="glycosylation site" description="N-linked (GlcNAc...) asparagine" evidence="3">
    <location>
        <position position="294"/>
    </location>
</feature>
<feature type="disulfide bond" evidence="1">
    <location>
        <begin position="30"/>
        <end position="60"/>
    </location>
</feature>
<feature type="disulfide bond" evidence="1">
    <location>
        <begin position="61"/>
        <end position="68"/>
    </location>
</feature>
<feature type="disulfide bond" evidence="1">
    <location>
        <begin position="301"/>
        <end position="323"/>
    </location>
</feature>
<feature type="disulfide bond" evidence="1">
    <location>
        <begin position="325"/>
        <end position="332"/>
    </location>
</feature>
<feature type="sequence conflict" description="In Ref. 1; AAK14075." evidence="7" ref="1">
    <original>N</original>
    <variation>T</variation>
    <location>
        <position position="47"/>
    </location>
</feature>
<feature type="sequence conflict" description="In Ref. 1; AAK14075." evidence="7" ref="1">
    <original>S</original>
    <variation>F</variation>
    <location>
        <position position="135"/>
    </location>
</feature>
<feature type="sequence conflict" description="In Ref. 1; AAK14075." evidence="7" ref="1">
    <original>L</original>
    <variation>I</variation>
    <location>
        <position position="177"/>
    </location>
</feature>
<feature type="sequence conflict" description="In Ref. 2; AAM74142." evidence="7" ref="2">
    <original>GLH</original>
    <variation>YLY</variation>
    <location>
        <begin position="199"/>
        <end position="201"/>
    </location>
</feature>
<feature type="sequence conflict" description="In Ref. 2; AAM74142." evidence="7" ref="2">
    <original>N</original>
    <variation>T</variation>
    <location>
        <position position="221"/>
    </location>
</feature>
<feature type="sequence conflict" description="In Ref. 2; AAM74142." evidence="7" ref="2">
    <original>L</original>
    <variation>P</variation>
    <location>
        <position position="234"/>
    </location>
</feature>
<protein>
    <recommendedName>
        <fullName evidence="1">Polygalacturonase inhibitor</fullName>
    </recommendedName>
    <alternativeName>
        <fullName evidence="1 9">Polygalacturonase-inhibiting protein</fullName>
        <shortName>PGIG</shortName>
    </alternativeName>
</protein>